<comment type="function">
    <text evidence="1">Allows the formation of correctly charged Gln-tRNA(Gln) through the transamidation of misacylated Glu-tRNA(Gln) in organisms which lack glutaminyl-tRNA synthetase. The reaction takes place in the presence of glutamine and ATP through an activated gamma-phospho-Glu-tRNA(Gln).</text>
</comment>
<comment type="catalytic activity">
    <reaction evidence="1">
        <text>L-glutamyl-tRNA(Gln) + L-glutamine + ATP + H2O = L-glutaminyl-tRNA(Gln) + L-glutamate + ADP + phosphate + H(+)</text>
        <dbReference type="Rhea" id="RHEA:17521"/>
        <dbReference type="Rhea" id="RHEA-COMP:9681"/>
        <dbReference type="Rhea" id="RHEA-COMP:9684"/>
        <dbReference type="ChEBI" id="CHEBI:15377"/>
        <dbReference type="ChEBI" id="CHEBI:15378"/>
        <dbReference type="ChEBI" id="CHEBI:29985"/>
        <dbReference type="ChEBI" id="CHEBI:30616"/>
        <dbReference type="ChEBI" id="CHEBI:43474"/>
        <dbReference type="ChEBI" id="CHEBI:58359"/>
        <dbReference type="ChEBI" id="CHEBI:78520"/>
        <dbReference type="ChEBI" id="CHEBI:78521"/>
        <dbReference type="ChEBI" id="CHEBI:456216"/>
        <dbReference type="EC" id="6.3.5.7"/>
    </reaction>
</comment>
<comment type="subunit">
    <text evidence="1">Heterotrimer of A, B and C subunits.</text>
</comment>
<comment type="similarity">
    <text evidence="1">Belongs to the amidase family. GatA subfamily.</text>
</comment>
<proteinExistence type="inferred from homology"/>
<feature type="chain" id="PRO_1000015865" description="Glutamyl-tRNA(Gln) amidotransferase subunit A">
    <location>
        <begin position="1"/>
        <end position="493"/>
    </location>
</feature>
<feature type="active site" description="Charge relay system" evidence="1">
    <location>
        <position position="81"/>
    </location>
</feature>
<feature type="active site" description="Charge relay system" evidence="1">
    <location>
        <position position="156"/>
    </location>
</feature>
<feature type="active site" description="Acyl-ester intermediate" evidence="1">
    <location>
        <position position="180"/>
    </location>
</feature>
<keyword id="KW-0067">ATP-binding</keyword>
<keyword id="KW-0436">Ligase</keyword>
<keyword id="KW-0547">Nucleotide-binding</keyword>
<keyword id="KW-0648">Protein biosynthesis</keyword>
<gene>
    <name evidence="1" type="primary">gatA</name>
    <name type="ordered locus">MAV_3859</name>
</gene>
<organism>
    <name type="scientific">Mycobacterium avium (strain 104)</name>
    <dbReference type="NCBI Taxonomy" id="243243"/>
    <lineage>
        <taxon>Bacteria</taxon>
        <taxon>Bacillati</taxon>
        <taxon>Actinomycetota</taxon>
        <taxon>Actinomycetes</taxon>
        <taxon>Mycobacteriales</taxon>
        <taxon>Mycobacteriaceae</taxon>
        <taxon>Mycobacterium</taxon>
        <taxon>Mycobacterium avium complex (MAC)</taxon>
    </lineage>
</organism>
<sequence>MNEIIRSDAATLAARIAAKELSSVEATQACLDQIAATDERYHAFLHVAADEALGAAAVVDEAVAAGERLPSPLAGVPLALKDVFTTVDMPTTCGSKILQGWRSPYDATVTTKLRAAGIPILGKTNMDEFAMGSSTENSAYGPTRNPWNVERVPGGSGGGSAAALAAFQAPLAIGSDTGGSIRQPAALTATVGVKPTYGTVSRYGLVACASSLDQGGPCARTVLDTALLHQVIAGHDIRDSTSVDAPVPDVVGAARAGAAGDLKGVRVGVVKQLRGEGYQPGVLASFEAAVEQLTALGAEVSEVDCPHFEYALAAYYLILPSEVSSNLARFDAMRYGLRIGDDGSHSAEEVMALTRAAGFGPEVKRRIMIGTYALSAGYYDAYYNQAQKVRTLIARDLDAAYESVDVVVSPATPTTAFGLGEKVDDPLAMYLFDLCTLPLNLAGHCGMSVPSGLSPDDDLPVGLQIMAPALADDRLYRVGAAYEAARGPLRSAI</sequence>
<accession>A0QJD4</accession>
<evidence type="ECO:0000255" key="1">
    <source>
        <dbReference type="HAMAP-Rule" id="MF_00120"/>
    </source>
</evidence>
<protein>
    <recommendedName>
        <fullName evidence="1">Glutamyl-tRNA(Gln) amidotransferase subunit A</fullName>
        <shortName evidence="1">Glu-ADT subunit A</shortName>
        <ecNumber evidence="1">6.3.5.7</ecNumber>
    </recommendedName>
</protein>
<dbReference type="EC" id="6.3.5.7" evidence="1"/>
<dbReference type="EMBL" id="CP000479">
    <property type="protein sequence ID" value="ABK64839.1"/>
    <property type="molecule type" value="Genomic_DNA"/>
</dbReference>
<dbReference type="RefSeq" id="WP_009978254.1">
    <property type="nucleotide sequence ID" value="NC_008595.1"/>
</dbReference>
<dbReference type="SMR" id="A0QJD4"/>
<dbReference type="KEGG" id="mav:MAV_3859"/>
<dbReference type="HOGENOM" id="CLU_009600_0_3_11"/>
<dbReference type="Proteomes" id="UP000001574">
    <property type="component" value="Chromosome"/>
</dbReference>
<dbReference type="GO" id="GO:0030956">
    <property type="term" value="C:glutamyl-tRNA(Gln) amidotransferase complex"/>
    <property type="evidence" value="ECO:0007669"/>
    <property type="project" value="InterPro"/>
</dbReference>
<dbReference type="GO" id="GO:0005524">
    <property type="term" value="F:ATP binding"/>
    <property type="evidence" value="ECO:0007669"/>
    <property type="project" value="UniProtKB-KW"/>
</dbReference>
<dbReference type="GO" id="GO:0050567">
    <property type="term" value="F:glutaminyl-tRNA synthase (glutamine-hydrolyzing) activity"/>
    <property type="evidence" value="ECO:0007669"/>
    <property type="project" value="UniProtKB-UniRule"/>
</dbReference>
<dbReference type="GO" id="GO:0006412">
    <property type="term" value="P:translation"/>
    <property type="evidence" value="ECO:0007669"/>
    <property type="project" value="UniProtKB-UniRule"/>
</dbReference>
<dbReference type="Gene3D" id="3.90.1300.10">
    <property type="entry name" value="Amidase signature (AS) domain"/>
    <property type="match status" value="1"/>
</dbReference>
<dbReference type="HAMAP" id="MF_00120">
    <property type="entry name" value="GatA"/>
    <property type="match status" value="1"/>
</dbReference>
<dbReference type="InterPro" id="IPR000120">
    <property type="entry name" value="Amidase"/>
</dbReference>
<dbReference type="InterPro" id="IPR020556">
    <property type="entry name" value="Amidase_CS"/>
</dbReference>
<dbReference type="InterPro" id="IPR023631">
    <property type="entry name" value="Amidase_dom"/>
</dbReference>
<dbReference type="InterPro" id="IPR036928">
    <property type="entry name" value="AS_sf"/>
</dbReference>
<dbReference type="InterPro" id="IPR004412">
    <property type="entry name" value="GatA"/>
</dbReference>
<dbReference type="NCBIfam" id="TIGR00132">
    <property type="entry name" value="gatA"/>
    <property type="match status" value="1"/>
</dbReference>
<dbReference type="PANTHER" id="PTHR11895:SF151">
    <property type="entry name" value="GLUTAMYL-TRNA(GLN) AMIDOTRANSFERASE SUBUNIT A"/>
    <property type="match status" value="1"/>
</dbReference>
<dbReference type="PANTHER" id="PTHR11895">
    <property type="entry name" value="TRANSAMIDASE"/>
    <property type="match status" value="1"/>
</dbReference>
<dbReference type="Pfam" id="PF01425">
    <property type="entry name" value="Amidase"/>
    <property type="match status" value="1"/>
</dbReference>
<dbReference type="SUPFAM" id="SSF75304">
    <property type="entry name" value="Amidase signature (AS) enzymes"/>
    <property type="match status" value="1"/>
</dbReference>
<dbReference type="PROSITE" id="PS00571">
    <property type="entry name" value="AMIDASES"/>
    <property type="match status" value="1"/>
</dbReference>
<reference key="1">
    <citation type="submission" date="2006-10" db="EMBL/GenBank/DDBJ databases">
        <authorList>
            <person name="Fleischmann R.D."/>
            <person name="Dodson R.J."/>
            <person name="Haft D.H."/>
            <person name="Merkel J.S."/>
            <person name="Nelson W.C."/>
            <person name="Fraser C.M."/>
        </authorList>
    </citation>
    <scope>NUCLEOTIDE SEQUENCE [LARGE SCALE GENOMIC DNA]</scope>
    <source>
        <strain>104</strain>
    </source>
</reference>
<name>GATA_MYCA1</name>